<evidence type="ECO:0000250" key="1"/>
<evidence type="ECO:0000255" key="2"/>
<evidence type="ECO:0000256" key="3">
    <source>
        <dbReference type="SAM" id="MobiDB-lite"/>
    </source>
</evidence>
<evidence type="ECO:0000305" key="4"/>
<protein>
    <recommendedName>
        <fullName>Cytochrome P450 71A8</fullName>
        <ecNumber>1.14.-.-</ecNumber>
    </recommendedName>
</protein>
<sequence>MYSIAFMLVLRKMDEIISHTLAFQALVSLILLISITKWLSNSPKNKNSSPPSPRKLPILGNLLQLGSLPHHNLRSMARKHGPIMLLHLGSVRPVSSRRRPRGNHENSRSRLRRPRGSRSAALQLQGRVGGYGEYWRQLKTICVVQLLSNKRVQSFRSVREEETELLMKKIGDSSGNVNLSHMFTQLTNDVVCRSAIGRKYGAGDENGEKFLEILREFLELLGAISIGDFVPSLWWINRINGFDRRVDRIAKEMDEFLEKVIHERLENPAAKAEENFVDILLEIYRNNSAGVSIDRDSIKAIILDVFAAGTDTTAVVLEWAMTELLRHPEIMKKLQSEVRQVVKDKHNITDDDIEKMHYLKAVMKETMRFHTPIPLLVPRVARNDVEVMGYDVPVGTMVMINAWAIGRDPTSWDEPEKFRPERFLNSSVDFKGLDFELIPFGAGRRGCPGTTFPMATLEFTLANLMQKFDWELPHECRELDMSERPGVAIRRVIPLLAIGTKM</sequence>
<organism>
    <name type="scientific">Mentha piperita</name>
    <name type="common">Peppermint</name>
    <name type="synonym">Mentha aquatica x Mentha spicata</name>
    <dbReference type="NCBI Taxonomy" id="34256"/>
    <lineage>
        <taxon>Eukaryota</taxon>
        <taxon>Viridiplantae</taxon>
        <taxon>Streptophyta</taxon>
        <taxon>Embryophyta</taxon>
        <taxon>Tracheophyta</taxon>
        <taxon>Spermatophyta</taxon>
        <taxon>Magnoliopsida</taxon>
        <taxon>eudicotyledons</taxon>
        <taxon>Gunneridae</taxon>
        <taxon>Pentapetalae</taxon>
        <taxon>asterids</taxon>
        <taxon>lamiids</taxon>
        <taxon>Lamiales</taxon>
        <taxon>Lamiaceae</taxon>
        <taxon>Nepetoideae</taxon>
        <taxon>Mentheae</taxon>
        <taxon>Menthinae</taxon>
        <taxon>Mentha</taxon>
    </lineage>
</organism>
<feature type="chain" id="PRO_0000052061" description="Cytochrome P450 71A8">
    <location>
        <begin position="1"/>
        <end position="502"/>
    </location>
</feature>
<feature type="transmembrane region" description="Helical" evidence="2">
    <location>
        <begin position="16"/>
        <end position="36"/>
    </location>
</feature>
<feature type="region of interest" description="Disordered" evidence="3">
    <location>
        <begin position="93"/>
        <end position="119"/>
    </location>
</feature>
<feature type="binding site" description="axial binding residue" evidence="1">
    <location>
        <position position="447"/>
    </location>
    <ligand>
        <name>heme</name>
        <dbReference type="ChEBI" id="CHEBI:30413"/>
    </ligand>
    <ligandPart>
        <name>Fe</name>
        <dbReference type="ChEBI" id="CHEBI:18248"/>
    </ligandPart>
</feature>
<dbReference type="EC" id="1.14.-.-"/>
<dbReference type="EMBL" id="Z33875">
    <property type="protein sequence ID" value="CAA83941.1"/>
    <property type="molecule type" value="Genomic_DNA"/>
</dbReference>
<dbReference type="PIR" id="S45039">
    <property type="entry name" value="S45039"/>
</dbReference>
<dbReference type="SMR" id="Q42716"/>
<dbReference type="GO" id="GO:0016020">
    <property type="term" value="C:membrane"/>
    <property type="evidence" value="ECO:0007669"/>
    <property type="project" value="UniProtKB-SubCell"/>
</dbReference>
<dbReference type="GO" id="GO:0020037">
    <property type="term" value="F:heme binding"/>
    <property type="evidence" value="ECO:0007669"/>
    <property type="project" value="InterPro"/>
</dbReference>
<dbReference type="GO" id="GO:0005506">
    <property type="term" value="F:iron ion binding"/>
    <property type="evidence" value="ECO:0007669"/>
    <property type="project" value="InterPro"/>
</dbReference>
<dbReference type="GO" id="GO:0004497">
    <property type="term" value="F:monooxygenase activity"/>
    <property type="evidence" value="ECO:0007669"/>
    <property type="project" value="UniProtKB-KW"/>
</dbReference>
<dbReference type="GO" id="GO:0016705">
    <property type="term" value="F:oxidoreductase activity, acting on paired donors, with incorporation or reduction of molecular oxygen"/>
    <property type="evidence" value="ECO:0007669"/>
    <property type="project" value="InterPro"/>
</dbReference>
<dbReference type="CDD" id="cd11072">
    <property type="entry name" value="CYP71-like"/>
    <property type="match status" value="1"/>
</dbReference>
<dbReference type="FunFam" id="1.10.630.10:FF:000011">
    <property type="entry name" value="Cytochrome P450 83B1"/>
    <property type="match status" value="1"/>
</dbReference>
<dbReference type="Gene3D" id="1.10.630.10">
    <property type="entry name" value="Cytochrome P450"/>
    <property type="match status" value="1"/>
</dbReference>
<dbReference type="InterPro" id="IPR001128">
    <property type="entry name" value="Cyt_P450"/>
</dbReference>
<dbReference type="InterPro" id="IPR017972">
    <property type="entry name" value="Cyt_P450_CS"/>
</dbReference>
<dbReference type="InterPro" id="IPR002401">
    <property type="entry name" value="Cyt_P450_E_grp-I"/>
</dbReference>
<dbReference type="InterPro" id="IPR036396">
    <property type="entry name" value="Cyt_P450_sf"/>
</dbReference>
<dbReference type="PANTHER" id="PTHR47955:SF15">
    <property type="entry name" value="CYTOCHROME P450 71A2-LIKE"/>
    <property type="match status" value="1"/>
</dbReference>
<dbReference type="PANTHER" id="PTHR47955">
    <property type="entry name" value="CYTOCHROME P450 FAMILY 71 PROTEIN"/>
    <property type="match status" value="1"/>
</dbReference>
<dbReference type="Pfam" id="PF00067">
    <property type="entry name" value="p450"/>
    <property type="match status" value="1"/>
</dbReference>
<dbReference type="PRINTS" id="PR00463">
    <property type="entry name" value="EP450I"/>
</dbReference>
<dbReference type="PRINTS" id="PR00385">
    <property type="entry name" value="P450"/>
</dbReference>
<dbReference type="SUPFAM" id="SSF48264">
    <property type="entry name" value="Cytochrome P450"/>
    <property type="match status" value="1"/>
</dbReference>
<dbReference type="PROSITE" id="PS00086">
    <property type="entry name" value="CYTOCHROME_P450"/>
    <property type="match status" value="1"/>
</dbReference>
<reference key="1">
    <citation type="submission" date="1994-05" db="EMBL/GenBank/DDBJ databases">
        <title>Molecular cloning of a genomic DNA for cytochrome P-450 oxidase from Mentha piperita.</title>
        <authorList>
            <person name="Kang M.H."/>
            <person name="Choi Y.D."/>
        </authorList>
    </citation>
    <scope>NUCLEOTIDE SEQUENCE [GENOMIC DNA]</scope>
</reference>
<comment type="cofactor">
    <cofactor evidence="1">
        <name>heme</name>
        <dbReference type="ChEBI" id="CHEBI:30413"/>
    </cofactor>
</comment>
<comment type="subcellular location">
    <subcellularLocation>
        <location evidence="4">Membrane</location>
        <topology evidence="4">Single-pass membrane protein</topology>
    </subcellularLocation>
</comment>
<comment type="similarity">
    <text evidence="4">Belongs to the cytochrome P450 family.</text>
</comment>
<proteinExistence type="inferred from homology"/>
<gene>
    <name type="primary">CYP71A8</name>
</gene>
<name>C71A8_MENPI</name>
<keyword id="KW-0349">Heme</keyword>
<keyword id="KW-0408">Iron</keyword>
<keyword id="KW-0472">Membrane</keyword>
<keyword id="KW-0479">Metal-binding</keyword>
<keyword id="KW-0503">Monooxygenase</keyword>
<keyword id="KW-0560">Oxidoreductase</keyword>
<keyword id="KW-0812">Transmembrane</keyword>
<keyword id="KW-1133">Transmembrane helix</keyword>
<accession>Q42716</accession>